<accession>Q8U1R4</accession>
<organism>
    <name type="scientific">Pyrococcus furiosus (strain ATCC 43587 / DSM 3638 / JCM 8422 / Vc1)</name>
    <dbReference type="NCBI Taxonomy" id="186497"/>
    <lineage>
        <taxon>Archaea</taxon>
        <taxon>Methanobacteriati</taxon>
        <taxon>Methanobacteriota</taxon>
        <taxon>Thermococci</taxon>
        <taxon>Thermococcales</taxon>
        <taxon>Thermococcaceae</taxon>
        <taxon>Pyrococcus</taxon>
    </lineage>
</organism>
<protein>
    <recommendedName>
        <fullName>Ribosome biogenesis protein Nop10</fullName>
    </recommendedName>
</protein>
<comment type="function">
    <text evidence="1">Involved in ribosome biogenesis; more specifically in 18S rRNA pseudouridylation and in cleavage of pre-rRNA.</text>
</comment>
<comment type="interaction">
    <interactant intactId="EBI-9025188">
        <id>Q8U1R4</id>
    </interactant>
    <interactant intactId="EBI-9025178">
        <id>Q7LWY0</id>
        <label>truB</label>
    </interactant>
    <organismsDiffer>false</organismsDiffer>
    <experiments>6</experiments>
</comment>
<comment type="similarity">
    <text evidence="2">Belongs to the NOP10 family.</text>
</comment>
<dbReference type="EMBL" id="AE009950">
    <property type="protein sequence ID" value="AAL81265.1"/>
    <property type="molecule type" value="Genomic_DNA"/>
</dbReference>
<dbReference type="RefSeq" id="WP_011012281.1">
    <property type="nucleotide sequence ID" value="NZ_CP023154.1"/>
</dbReference>
<dbReference type="PDB" id="2EY4">
    <property type="method" value="X-ray"/>
    <property type="resolution" value="2.11 A"/>
    <property type="chains" value="E/F=1-55"/>
</dbReference>
<dbReference type="PDB" id="2HVY">
    <property type="method" value="X-ray"/>
    <property type="resolution" value="2.30 A"/>
    <property type="chains" value="C=1-60"/>
</dbReference>
<dbReference type="PDB" id="2RFK">
    <property type="method" value="X-ray"/>
    <property type="resolution" value="2.87 A"/>
    <property type="chains" value="B=3-55"/>
</dbReference>
<dbReference type="PDB" id="3HAX">
    <property type="method" value="X-ray"/>
    <property type="resolution" value="2.11 A"/>
    <property type="chains" value="C=1-60"/>
</dbReference>
<dbReference type="PDB" id="3HAY">
    <property type="method" value="X-ray"/>
    <property type="resolution" value="4.99 A"/>
    <property type="chains" value="C=1-60"/>
</dbReference>
<dbReference type="PDB" id="3HJW">
    <property type="method" value="X-ray"/>
    <property type="resolution" value="2.35 A"/>
    <property type="chains" value="B=3-55"/>
</dbReference>
<dbReference type="PDB" id="3HJY">
    <property type="method" value="X-ray"/>
    <property type="resolution" value="3.65 A"/>
    <property type="chains" value="B=3-55"/>
</dbReference>
<dbReference type="PDB" id="3LWO">
    <property type="method" value="X-ray"/>
    <property type="resolution" value="2.86 A"/>
    <property type="chains" value="B=1-60"/>
</dbReference>
<dbReference type="PDB" id="3LWP">
    <property type="method" value="X-ray"/>
    <property type="resolution" value="2.50 A"/>
    <property type="chains" value="B=1-60"/>
</dbReference>
<dbReference type="PDB" id="3LWQ">
    <property type="method" value="X-ray"/>
    <property type="resolution" value="2.68 A"/>
    <property type="chains" value="B=1-60"/>
</dbReference>
<dbReference type="PDB" id="3LWR">
    <property type="method" value="X-ray"/>
    <property type="resolution" value="2.20 A"/>
    <property type="chains" value="B=1-60"/>
</dbReference>
<dbReference type="PDB" id="3LWV">
    <property type="method" value="X-ray"/>
    <property type="resolution" value="2.50 A"/>
    <property type="chains" value="B=1-60"/>
</dbReference>
<dbReference type="PDB" id="3MQK">
    <property type="method" value="X-ray"/>
    <property type="resolution" value="2.80 A"/>
    <property type="chains" value="B=4-55"/>
</dbReference>
<dbReference type="PDBsum" id="2EY4"/>
<dbReference type="PDBsum" id="2HVY"/>
<dbReference type="PDBsum" id="2RFK"/>
<dbReference type="PDBsum" id="3HAX"/>
<dbReference type="PDBsum" id="3HAY"/>
<dbReference type="PDBsum" id="3HJW"/>
<dbReference type="PDBsum" id="3HJY"/>
<dbReference type="PDBsum" id="3LWO"/>
<dbReference type="PDBsum" id="3LWP"/>
<dbReference type="PDBsum" id="3LWQ"/>
<dbReference type="PDBsum" id="3LWR"/>
<dbReference type="PDBsum" id="3LWV"/>
<dbReference type="PDBsum" id="3MQK"/>
<dbReference type="SMR" id="Q8U1R4"/>
<dbReference type="DIP" id="DIP-48527N"/>
<dbReference type="IntAct" id="Q8U1R4">
    <property type="interactions" value="3"/>
</dbReference>
<dbReference type="STRING" id="186497.PF1141"/>
<dbReference type="PaxDb" id="186497-PF1141"/>
<dbReference type="KEGG" id="pfu:PF1141"/>
<dbReference type="PATRIC" id="fig|186497.12.peg.1202"/>
<dbReference type="eggNOG" id="arCOG00906">
    <property type="taxonomic scope" value="Archaea"/>
</dbReference>
<dbReference type="HOGENOM" id="CLU_196480_1_0_2"/>
<dbReference type="OrthoDB" id="7259at2157"/>
<dbReference type="PhylomeDB" id="Q8U1R4"/>
<dbReference type="EvolutionaryTrace" id="Q8U1R4"/>
<dbReference type="Proteomes" id="UP000001013">
    <property type="component" value="Chromosome"/>
</dbReference>
<dbReference type="GO" id="GO:1990904">
    <property type="term" value="C:ribonucleoprotein complex"/>
    <property type="evidence" value="ECO:0007669"/>
    <property type="project" value="UniProtKB-KW"/>
</dbReference>
<dbReference type="GO" id="GO:0030515">
    <property type="term" value="F:snoRNA binding"/>
    <property type="evidence" value="ECO:0007669"/>
    <property type="project" value="InterPro"/>
</dbReference>
<dbReference type="GO" id="GO:0001522">
    <property type="term" value="P:pseudouridine synthesis"/>
    <property type="evidence" value="ECO:0007669"/>
    <property type="project" value="InterPro"/>
</dbReference>
<dbReference type="GO" id="GO:0006364">
    <property type="term" value="P:rRNA processing"/>
    <property type="evidence" value="ECO:0007669"/>
    <property type="project" value="UniProtKB-UniRule"/>
</dbReference>
<dbReference type="Gene3D" id="2.20.28.40">
    <property type="entry name" value="H/ACA ribonucleoprotein complex, subunit Nop10"/>
    <property type="match status" value="1"/>
</dbReference>
<dbReference type="HAMAP" id="MF_00803">
    <property type="entry name" value="Nop10"/>
    <property type="match status" value="1"/>
</dbReference>
<dbReference type="InterPro" id="IPR007264">
    <property type="entry name" value="H/ACA_rnp_Nop10"/>
</dbReference>
<dbReference type="InterPro" id="IPR036756">
    <property type="entry name" value="H/ACA_rnp_Nop10_sf"/>
</dbReference>
<dbReference type="InterPro" id="IPR023532">
    <property type="entry name" value="Nop10_arc-typ"/>
</dbReference>
<dbReference type="NCBIfam" id="NF009623">
    <property type="entry name" value="PRK13130.1"/>
    <property type="match status" value="1"/>
</dbReference>
<dbReference type="PANTHER" id="PTHR13305:SF0">
    <property type="entry name" value="H_ACA RIBONUCLEOPROTEIN COMPLEX SUBUNIT 3"/>
    <property type="match status" value="1"/>
</dbReference>
<dbReference type="PANTHER" id="PTHR13305">
    <property type="entry name" value="RIBOSOME BIOGENESIS PROTEIN NOP10"/>
    <property type="match status" value="1"/>
</dbReference>
<dbReference type="Pfam" id="PF04135">
    <property type="entry name" value="Nop10p"/>
    <property type="match status" value="1"/>
</dbReference>
<dbReference type="SUPFAM" id="SSF144210">
    <property type="entry name" value="Nop10-like SnoRNP"/>
    <property type="match status" value="1"/>
</dbReference>
<sequence>MRFRIRKCPKCGRYTLKEVCPVCGEKTKVAHPPRFSPEDPYGEYRRRWKREVLGIGRKEK</sequence>
<name>NOP10_PYRFU</name>
<proteinExistence type="evidence at protein level"/>
<gene>
    <name type="primary">nop10</name>
    <name type="ordered locus">PF1141</name>
</gene>
<keyword id="KW-0002">3D-structure</keyword>
<keyword id="KW-1185">Reference proteome</keyword>
<keyword id="KW-0687">Ribonucleoprotein</keyword>
<keyword id="KW-0690">Ribosome biogenesis</keyword>
<keyword id="KW-0698">rRNA processing</keyword>
<reference key="1">
    <citation type="journal article" date="1999" name="Genetics">
        <title>Divergence of the hyperthermophilic archaea Pyrococcus furiosus and P. horikoshii inferred from complete genomic sequences.</title>
        <authorList>
            <person name="Maeder D.L."/>
            <person name="Weiss R.B."/>
            <person name="Dunn D.M."/>
            <person name="Cherry J.L."/>
            <person name="Gonzalez J.M."/>
            <person name="DiRuggiero J."/>
            <person name="Robb F.T."/>
        </authorList>
    </citation>
    <scope>NUCLEOTIDE SEQUENCE [LARGE SCALE GENOMIC DNA]</scope>
    <source>
        <strain>ATCC 43587 / DSM 3638 / JCM 8422 / Vc1</strain>
    </source>
</reference>
<evidence type="ECO:0000250" key="1"/>
<evidence type="ECO:0000305" key="2"/>
<evidence type="ECO:0007829" key="3">
    <source>
        <dbReference type="PDB" id="2EY4"/>
    </source>
</evidence>
<feature type="chain" id="PRO_0000149024" description="Ribosome biogenesis protein Nop10">
    <location>
        <begin position="1"/>
        <end position="60"/>
    </location>
</feature>
<feature type="turn" evidence="3">
    <location>
        <begin position="9"/>
        <end position="11"/>
    </location>
</feature>
<feature type="strand" evidence="3">
    <location>
        <begin position="14"/>
        <end position="19"/>
    </location>
</feature>
<feature type="turn" evidence="3">
    <location>
        <begin position="21"/>
        <end position="23"/>
    </location>
</feature>
<feature type="strand" evidence="3">
    <location>
        <begin position="28"/>
        <end position="31"/>
    </location>
</feature>
<feature type="helix" evidence="3">
    <location>
        <begin position="42"/>
        <end position="53"/>
    </location>
</feature>